<keyword id="KW-0328">Glycosyltransferase</keyword>
<keyword id="KW-0460">Magnesium</keyword>
<keyword id="KW-0665">Pyrimidine biosynthesis</keyword>
<keyword id="KW-1185">Reference proteome</keyword>
<keyword id="KW-0808">Transferase</keyword>
<organism>
    <name type="scientific">Staphylothermus marinus (strain ATCC 43588 / DSM 3639 / JCM 9404 / F1)</name>
    <dbReference type="NCBI Taxonomy" id="399550"/>
    <lineage>
        <taxon>Archaea</taxon>
        <taxon>Thermoproteota</taxon>
        <taxon>Thermoprotei</taxon>
        <taxon>Desulfurococcales</taxon>
        <taxon>Desulfurococcaceae</taxon>
        <taxon>Staphylothermus</taxon>
    </lineage>
</organism>
<proteinExistence type="inferred from homology"/>
<comment type="function">
    <text evidence="1">Catalyzes the transfer of a ribosyl phosphate group from 5-phosphoribose 1-diphosphate to orotate, leading to the formation of orotidine monophosphate (OMP).</text>
</comment>
<comment type="catalytic activity">
    <reaction evidence="1">
        <text>orotidine 5'-phosphate + diphosphate = orotate + 5-phospho-alpha-D-ribose 1-diphosphate</text>
        <dbReference type="Rhea" id="RHEA:10380"/>
        <dbReference type="ChEBI" id="CHEBI:30839"/>
        <dbReference type="ChEBI" id="CHEBI:33019"/>
        <dbReference type="ChEBI" id="CHEBI:57538"/>
        <dbReference type="ChEBI" id="CHEBI:58017"/>
        <dbReference type="EC" id="2.4.2.10"/>
    </reaction>
</comment>
<comment type="cofactor">
    <cofactor evidence="1">
        <name>Mg(2+)</name>
        <dbReference type="ChEBI" id="CHEBI:18420"/>
    </cofactor>
</comment>
<comment type="pathway">
    <text evidence="1">Pyrimidine metabolism; UMP biosynthesis via de novo pathway; UMP from orotate: step 1/2.</text>
</comment>
<comment type="subunit">
    <text evidence="1">Homodimer.</text>
</comment>
<comment type="similarity">
    <text evidence="1">Belongs to the purine/pyrimidine phosphoribosyltransferase family. PyrE subfamily.</text>
</comment>
<gene>
    <name evidence="1" type="primary">pyrE</name>
    <name type="ordered locus">Smar_0602</name>
</gene>
<sequence>MNSESVLEEIVLELYRNKLFKIGEYRLTSGKISPYYIDLRILPSYYDIYSKIIDISLSKLEKLNFDIVVGIESAGIIHASFIACKTHKPVGYVRKKPKQHGTKRLVEGIVADRNVLVVDDVATTGGSLEHAVNAVRSMGGIVEKAFVFVDREEGARERLKRLGVELISLMNIWFIINVLVKHRLIDEQTYYLIKNYLNREKHS</sequence>
<reference key="1">
    <citation type="journal article" date="2009" name="BMC Genomics">
        <title>The complete genome sequence of Staphylothermus marinus reveals differences in sulfur metabolism among heterotrophic Crenarchaeota.</title>
        <authorList>
            <person name="Anderson I.J."/>
            <person name="Dharmarajan L."/>
            <person name="Rodriguez J."/>
            <person name="Hooper S."/>
            <person name="Porat I."/>
            <person name="Ulrich L.E."/>
            <person name="Elkins J.G."/>
            <person name="Mavromatis K."/>
            <person name="Sun H."/>
            <person name="Land M."/>
            <person name="Lapidus A."/>
            <person name="Lucas S."/>
            <person name="Barry K."/>
            <person name="Huber H."/>
            <person name="Zhulin I.B."/>
            <person name="Whitman W.B."/>
            <person name="Mukhopadhyay B."/>
            <person name="Woese C."/>
            <person name="Bristow J."/>
            <person name="Kyrpides N."/>
        </authorList>
    </citation>
    <scope>NUCLEOTIDE SEQUENCE [LARGE SCALE GENOMIC DNA]</scope>
    <source>
        <strain>ATCC 43588 / DSM 3639 / JCM 9404 / F1</strain>
    </source>
</reference>
<reference key="2">
    <citation type="journal article" date="2009" name="Stand. Genomic Sci.">
        <title>Complete genome sequence of Staphylothermus marinus Stetter and Fiala 1986 type strain F1.</title>
        <authorList>
            <person name="Anderson I.J."/>
            <person name="Sun H."/>
            <person name="Lapidus A."/>
            <person name="Copeland A."/>
            <person name="Glavina Del Rio T."/>
            <person name="Tice H."/>
            <person name="Dalin E."/>
            <person name="Lucas S."/>
            <person name="Barry K."/>
            <person name="Land M."/>
            <person name="Richardson P."/>
            <person name="Huber H."/>
            <person name="Kyrpides N.C."/>
        </authorList>
    </citation>
    <scope>NUCLEOTIDE SEQUENCE [LARGE SCALE GENOMIC DNA]</scope>
    <source>
        <strain>ATCC 43588 / DSM 3639 / JCM 9404 / F1</strain>
    </source>
</reference>
<accession>A3DM49</accession>
<name>PYRE_STAMF</name>
<feature type="chain" id="PRO_0000298891" description="Orotate phosphoribosyltransferase">
    <location>
        <begin position="1"/>
        <end position="203"/>
    </location>
</feature>
<feature type="binding site" evidence="1">
    <location>
        <position position="94"/>
    </location>
    <ligand>
        <name>5-phospho-alpha-D-ribose 1-diphosphate</name>
        <dbReference type="ChEBI" id="CHEBI:58017"/>
        <note>ligand shared between dimeric partners</note>
    </ligand>
</feature>
<feature type="binding site" description="in other chain" evidence="1">
    <location>
        <position position="95"/>
    </location>
    <ligand>
        <name>5-phospho-alpha-D-ribose 1-diphosphate</name>
        <dbReference type="ChEBI" id="CHEBI:58017"/>
        <note>ligand shared between dimeric partners</note>
    </ligand>
</feature>
<feature type="binding site" evidence="1">
    <location>
        <position position="98"/>
    </location>
    <ligand>
        <name>5-phospho-alpha-D-ribose 1-diphosphate</name>
        <dbReference type="ChEBI" id="CHEBI:58017"/>
        <note>ligand shared between dimeric partners</note>
    </ligand>
</feature>
<feature type="binding site" evidence="1">
    <location>
        <position position="100"/>
    </location>
    <ligand>
        <name>5-phospho-alpha-D-ribose 1-diphosphate</name>
        <dbReference type="ChEBI" id="CHEBI:58017"/>
        <note>ligand shared between dimeric partners</note>
    </ligand>
</feature>
<feature type="binding site" description="in other chain" evidence="1">
    <location>
        <begin position="119"/>
        <end position="127"/>
    </location>
    <ligand>
        <name>5-phospho-alpha-D-ribose 1-diphosphate</name>
        <dbReference type="ChEBI" id="CHEBI:58017"/>
        <note>ligand shared between dimeric partners</note>
    </ligand>
</feature>
<feature type="binding site" evidence="1">
    <location>
        <position position="123"/>
    </location>
    <ligand>
        <name>orotate</name>
        <dbReference type="ChEBI" id="CHEBI:30839"/>
    </ligand>
</feature>
<feature type="binding site" evidence="1">
    <location>
        <position position="151"/>
    </location>
    <ligand>
        <name>orotate</name>
        <dbReference type="ChEBI" id="CHEBI:30839"/>
    </ligand>
</feature>
<protein>
    <recommendedName>
        <fullName evidence="1">Orotate phosphoribosyltransferase</fullName>
        <shortName evidence="1">OPRT</shortName>
        <shortName evidence="1">OPRTase</shortName>
        <ecNumber evidence="1">2.4.2.10</ecNumber>
    </recommendedName>
</protein>
<dbReference type="EC" id="2.4.2.10" evidence="1"/>
<dbReference type="EMBL" id="CP000575">
    <property type="protein sequence ID" value="ABN69709.1"/>
    <property type="molecule type" value="Genomic_DNA"/>
</dbReference>
<dbReference type="RefSeq" id="WP_011838900.1">
    <property type="nucleotide sequence ID" value="NC_009033.1"/>
</dbReference>
<dbReference type="SMR" id="A3DM49"/>
<dbReference type="STRING" id="399550.Smar_0602"/>
<dbReference type="GeneID" id="4907158"/>
<dbReference type="KEGG" id="smr:Smar_0602"/>
<dbReference type="eggNOG" id="arCOG00029">
    <property type="taxonomic scope" value="Archaea"/>
</dbReference>
<dbReference type="HOGENOM" id="CLU_074878_2_0_2"/>
<dbReference type="OrthoDB" id="9089at2157"/>
<dbReference type="UniPathway" id="UPA00070">
    <property type="reaction ID" value="UER00119"/>
</dbReference>
<dbReference type="Proteomes" id="UP000000254">
    <property type="component" value="Chromosome"/>
</dbReference>
<dbReference type="GO" id="GO:0000287">
    <property type="term" value="F:magnesium ion binding"/>
    <property type="evidence" value="ECO:0007669"/>
    <property type="project" value="UniProtKB-UniRule"/>
</dbReference>
<dbReference type="GO" id="GO:0004588">
    <property type="term" value="F:orotate phosphoribosyltransferase activity"/>
    <property type="evidence" value="ECO:0007669"/>
    <property type="project" value="UniProtKB-UniRule"/>
</dbReference>
<dbReference type="GO" id="GO:0044205">
    <property type="term" value="P:'de novo' UMP biosynthetic process"/>
    <property type="evidence" value="ECO:0007669"/>
    <property type="project" value="UniProtKB-UniRule"/>
</dbReference>
<dbReference type="GO" id="GO:0019856">
    <property type="term" value="P:pyrimidine nucleobase biosynthetic process"/>
    <property type="evidence" value="ECO:0007669"/>
    <property type="project" value="TreeGrafter"/>
</dbReference>
<dbReference type="CDD" id="cd06223">
    <property type="entry name" value="PRTases_typeI"/>
    <property type="match status" value="1"/>
</dbReference>
<dbReference type="Gene3D" id="3.40.50.2020">
    <property type="match status" value="1"/>
</dbReference>
<dbReference type="HAMAP" id="MF_01208">
    <property type="entry name" value="PyrE"/>
    <property type="match status" value="1"/>
</dbReference>
<dbReference type="InterPro" id="IPR023031">
    <property type="entry name" value="OPRT"/>
</dbReference>
<dbReference type="InterPro" id="IPR004467">
    <property type="entry name" value="Or_phspho_trans_dom"/>
</dbReference>
<dbReference type="InterPro" id="IPR000836">
    <property type="entry name" value="PRibTrfase_dom"/>
</dbReference>
<dbReference type="InterPro" id="IPR029057">
    <property type="entry name" value="PRTase-like"/>
</dbReference>
<dbReference type="NCBIfam" id="TIGR00336">
    <property type="entry name" value="pyrE"/>
    <property type="match status" value="1"/>
</dbReference>
<dbReference type="PANTHER" id="PTHR19278">
    <property type="entry name" value="OROTATE PHOSPHORIBOSYLTRANSFERASE"/>
    <property type="match status" value="1"/>
</dbReference>
<dbReference type="PANTHER" id="PTHR19278:SF9">
    <property type="entry name" value="URIDINE 5'-MONOPHOSPHATE SYNTHASE"/>
    <property type="match status" value="1"/>
</dbReference>
<dbReference type="Pfam" id="PF00156">
    <property type="entry name" value="Pribosyltran"/>
    <property type="match status" value="1"/>
</dbReference>
<dbReference type="SUPFAM" id="SSF53271">
    <property type="entry name" value="PRTase-like"/>
    <property type="match status" value="1"/>
</dbReference>
<evidence type="ECO:0000255" key="1">
    <source>
        <dbReference type="HAMAP-Rule" id="MF_01208"/>
    </source>
</evidence>